<reference key="1">
    <citation type="journal article" date="1997" name="J. Immunol.">
        <title>Molecular cloning of rat C4b binding protein alpha- and beta-chains: structural and functional relationships among human, bovine, rabbit, mouse, and rat proteins.</title>
        <authorList>
            <person name="Hillarp A."/>
            <person name="Wiklund H."/>
            <person name="Thern A."/>
            <person name="Dahlback B."/>
        </authorList>
    </citation>
    <scope>NUCLEOTIDE SEQUENCE [MRNA]</scope>
    <source>
        <strain>Sprague-Dawley</strain>
        <tissue>Liver</tissue>
    </source>
</reference>
<accession>Q63514</accession>
<name>C4BPA_RAT</name>
<evidence type="ECO:0000250" key="1"/>
<evidence type="ECO:0000255" key="2"/>
<evidence type="ECO:0000255" key="3">
    <source>
        <dbReference type="PROSITE-ProRule" id="PRU00302"/>
    </source>
</evidence>
<feature type="signal peptide" evidence="1">
    <location>
        <begin position="1"/>
        <end position="13"/>
    </location>
</feature>
<feature type="chain" id="PRO_0000005890" description="C4b-binding protein alpha chain">
    <location>
        <begin position="14"/>
        <end position="558"/>
    </location>
</feature>
<feature type="domain" description="Sushi 1" evidence="3">
    <location>
        <begin position="14"/>
        <end position="74"/>
    </location>
</feature>
<feature type="domain" description="Sushi 2" evidence="3">
    <location>
        <begin position="75"/>
        <end position="136"/>
    </location>
</feature>
<feature type="domain" description="Sushi 3" evidence="3">
    <location>
        <begin position="137"/>
        <end position="201"/>
    </location>
</feature>
<feature type="domain" description="Sushi 4" evidence="3">
    <location>
        <begin position="202"/>
        <end position="260"/>
    </location>
</feature>
<feature type="domain" description="Sushi 5" evidence="3">
    <location>
        <begin position="261"/>
        <end position="326"/>
    </location>
</feature>
<feature type="domain" description="Sushi 6" evidence="3">
    <location>
        <begin position="327"/>
        <end position="388"/>
    </location>
</feature>
<feature type="domain" description="Sushi 7" evidence="3">
    <location>
        <begin position="389"/>
        <end position="445"/>
    </location>
</feature>
<feature type="domain" description="Sushi 8" evidence="3">
    <location>
        <begin position="446"/>
        <end position="503"/>
    </location>
</feature>
<feature type="glycosylation site" description="N-linked (GlcNAc...) asparagine" evidence="2">
    <location>
        <position position="31"/>
    </location>
</feature>
<feature type="glycosylation site" description="N-linked (GlcNAc...) asparagine" evidence="2">
    <location>
        <position position="177"/>
    </location>
</feature>
<feature type="glycosylation site" description="N-linked (GlcNAc...) asparagine" evidence="2">
    <location>
        <position position="186"/>
    </location>
</feature>
<feature type="glycosylation site" description="N-linked (GlcNAc...) asparagine" evidence="2">
    <location>
        <position position="469"/>
    </location>
</feature>
<feature type="glycosylation site" description="N-linked (GlcNAc...) asparagine" evidence="2">
    <location>
        <position position="491"/>
    </location>
</feature>
<feature type="disulfide bond" evidence="3">
    <location>
        <begin position="15"/>
        <end position="60"/>
    </location>
</feature>
<feature type="disulfide bond" evidence="3">
    <location>
        <begin position="45"/>
        <end position="72"/>
    </location>
</feature>
<feature type="disulfide bond" evidence="3">
    <location>
        <begin position="77"/>
        <end position="118"/>
    </location>
</feature>
<feature type="disulfide bond" evidence="3">
    <location>
        <begin position="104"/>
        <end position="134"/>
    </location>
</feature>
<feature type="disulfide bond" evidence="3">
    <location>
        <begin position="139"/>
        <end position="182"/>
    </location>
</feature>
<feature type="disulfide bond" evidence="3">
    <location>
        <begin position="168"/>
        <end position="199"/>
    </location>
</feature>
<feature type="disulfide bond" evidence="3">
    <location>
        <begin position="204"/>
        <end position="246"/>
    </location>
</feature>
<feature type="disulfide bond" evidence="3">
    <location>
        <begin position="232"/>
        <end position="258"/>
    </location>
</feature>
<feature type="disulfide bond" evidence="3">
    <location>
        <begin position="263"/>
        <end position="312"/>
    </location>
</feature>
<feature type="disulfide bond" evidence="3">
    <location>
        <begin position="296"/>
        <end position="324"/>
    </location>
</feature>
<feature type="disulfide bond" evidence="3">
    <location>
        <begin position="329"/>
        <end position="373"/>
    </location>
</feature>
<feature type="disulfide bond" evidence="3">
    <location>
        <begin position="363"/>
        <end position="386"/>
    </location>
</feature>
<feature type="disulfide bond" evidence="3">
    <location>
        <begin position="390"/>
        <end position="431"/>
    </location>
</feature>
<feature type="disulfide bond" evidence="3">
    <location>
        <begin position="417"/>
        <end position="443"/>
    </location>
</feature>
<feature type="disulfide bond" evidence="3">
    <location>
        <begin position="447"/>
        <end position="488"/>
    </location>
</feature>
<feature type="disulfide bond" evidence="3">
    <location>
        <begin position="474"/>
        <end position="501"/>
    </location>
</feature>
<feature type="disulfide bond" description="Interchain (with beta chain)" evidence="3">
    <location>
        <position position="509"/>
    </location>
</feature>
<feature type="disulfide bond" description="Interchain (with beta chain)" evidence="3">
    <location>
        <position position="521"/>
    </location>
</feature>
<organism>
    <name type="scientific">Rattus norvegicus</name>
    <name type="common">Rat</name>
    <dbReference type="NCBI Taxonomy" id="10116"/>
    <lineage>
        <taxon>Eukaryota</taxon>
        <taxon>Metazoa</taxon>
        <taxon>Chordata</taxon>
        <taxon>Craniata</taxon>
        <taxon>Vertebrata</taxon>
        <taxon>Euteleostomi</taxon>
        <taxon>Mammalia</taxon>
        <taxon>Eutheria</taxon>
        <taxon>Euarchontoglires</taxon>
        <taxon>Glires</taxon>
        <taxon>Rodentia</taxon>
        <taxon>Myomorpha</taxon>
        <taxon>Muroidea</taxon>
        <taxon>Muridae</taxon>
        <taxon>Murinae</taxon>
        <taxon>Rattus</taxon>
    </lineage>
</organism>
<protein>
    <recommendedName>
        <fullName>C4b-binding protein alpha chain</fullName>
        <shortName>C4bp</shortName>
    </recommendedName>
</protein>
<dbReference type="EMBL" id="Z50051">
    <property type="protein sequence ID" value="CAA90391.1"/>
    <property type="molecule type" value="mRNA"/>
</dbReference>
<dbReference type="PIR" id="S57953">
    <property type="entry name" value="S57953"/>
</dbReference>
<dbReference type="SMR" id="Q63514"/>
<dbReference type="FunCoup" id="Q63514">
    <property type="interactions" value="46"/>
</dbReference>
<dbReference type="STRING" id="10116.ENSRNOP00000005461"/>
<dbReference type="CarbonylDB" id="Q63514"/>
<dbReference type="GlyCosmos" id="Q63514">
    <property type="glycosylation" value="5 sites, No reported glycans"/>
</dbReference>
<dbReference type="GlyGen" id="Q63514">
    <property type="glycosylation" value="5 sites"/>
</dbReference>
<dbReference type="PhosphoSitePlus" id="Q63514"/>
<dbReference type="PaxDb" id="10116-ENSRNOP00000005461"/>
<dbReference type="PeptideAtlas" id="Q63514"/>
<dbReference type="UCSC" id="RGD:2235">
    <property type="organism name" value="rat"/>
</dbReference>
<dbReference type="AGR" id="RGD:2235"/>
<dbReference type="RGD" id="2235">
    <property type="gene designation" value="C4bpa"/>
</dbReference>
<dbReference type="eggNOG" id="ENOG502SHRK">
    <property type="taxonomic scope" value="Eukaryota"/>
</dbReference>
<dbReference type="InParanoid" id="Q63514"/>
<dbReference type="PRO" id="PR:Q63514"/>
<dbReference type="Proteomes" id="UP000002494">
    <property type="component" value="Unplaced"/>
</dbReference>
<dbReference type="GO" id="GO:0043159">
    <property type="term" value="C:acrosomal matrix"/>
    <property type="evidence" value="ECO:0000266"/>
    <property type="project" value="RGD"/>
</dbReference>
<dbReference type="GO" id="GO:0001669">
    <property type="term" value="C:acrosomal vesicle"/>
    <property type="evidence" value="ECO:0000266"/>
    <property type="project" value="RGD"/>
</dbReference>
<dbReference type="GO" id="GO:0044297">
    <property type="term" value="C:cell body"/>
    <property type="evidence" value="ECO:0000266"/>
    <property type="project" value="RGD"/>
</dbReference>
<dbReference type="GO" id="GO:0031410">
    <property type="term" value="C:cytoplasmic vesicle"/>
    <property type="evidence" value="ECO:0000266"/>
    <property type="project" value="RGD"/>
</dbReference>
<dbReference type="GO" id="GO:0005615">
    <property type="term" value="C:extracellular space"/>
    <property type="evidence" value="ECO:0000266"/>
    <property type="project" value="RGD"/>
</dbReference>
<dbReference type="GO" id="GO:0002081">
    <property type="term" value="C:outer acrosomal membrane"/>
    <property type="evidence" value="ECO:0000266"/>
    <property type="project" value="RGD"/>
</dbReference>
<dbReference type="GO" id="GO:0005886">
    <property type="term" value="C:plasma membrane"/>
    <property type="evidence" value="ECO:0000266"/>
    <property type="project" value="RGD"/>
</dbReference>
<dbReference type="GO" id="GO:0002199">
    <property type="term" value="C:zona pellucida receptor complex"/>
    <property type="evidence" value="ECO:0000266"/>
    <property type="project" value="RGD"/>
</dbReference>
<dbReference type="GO" id="GO:0001848">
    <property type="term" value="F:complement binding"/>
    <property type="evidence" value="ECO:0000304"/>
    <property type="project" value="RGD"/>
</dbReference>
<dbReference type="GO" id="GO:0007339">
    <property type="term" value="P:binding of sperm to zona pellucida"/>
    <property type="evidence" value="ECO:0000266"/>
    <property type="project" value="RGD"/>
</dbReference>
<dbReference type="GO" id="GO:0006958">
    <property type="term" value="P:complement activation, classical pathway"/>
    <property type="evidence" value="ECO:0007669"/>
    <property type="project" value="UniProtKB-KW"/>
</dbReference>
<dbReference type="GO" id="GO:0006955">
    <property type="term" value="P:immune response"/>
    <property type="evidence" value="ECO:0000304"/>
    <property type="project" value="RGD"/>
</dbReference>
<dbReference type="GO" id="GO:0045087">
    <property type="term" value="P:innate immune response"/>
    <property type="evidence" value="ECO:0007669"/>
    <property type="project" value="UniProtKB-KW"/>
</dbReference>
<dbReference type="GO" id="GO:0045959">
    <property type="term" value="P:negative regulation of complement activation, classical pathway"/>
    <property type="evidence" value="ECO:0000266"/>
    <property type="project" value="RGD"/>
</dbReference>
<dbReference type="GO" id="GO:0045732">
    <property type="term" value="P:positive regulation of protein catabolic process"/>
    <property type="evidence" value="ECO:0000266"/>
    <property type="project" value="RGD"/>
</dbReference>
<dbReference type="GO" id="GO:1903027">
    <property type="term" value="P:regulation of opsonization"/>
    <property type="evidence" value="ECO:0000266"/>
    <property type="project" value="RGD"/>
</dbReference>
<dbReference type="GO" id="GO:0009609">
    <property type="term" value="P:response to symbiotic bacterium"/>
    <property type="evidence" value="ECO:0000266"/>
    <property type="project" value="RGD"/>
</dbReference>
<dbReference type="GO" id="GO:0007338">
    <property type="term" value="P:single fertilization"/>
    <property type="evidence" value="ECO:0000266"/>
    <property type="project" value="RGD"/>
</dbReference>
<dbReference type="GO" id="GO:0002456">
    <property type="term" value="P:T cell mediated immunity"/>
    <property type="evidence" value="ECO:0000318"/>
    <property type="project" value="GO_Central"/>
</dbReference>
<dbReference type="CDD" id="cd00033">
    <property type="entry name" value="CCP"/>
    <property type="match status" value="8"/>
</dbReference>
<dbReference type="FunFam" id="2.10.70.10:FF:000070">
    <property type="entry name" value="Complement C3d receptor 2"/>
    <property type="match status" value="1"/>
</dbReference>
<dbReference type="FunFam" id="2.10.70.10:FF:000055">
    <property type="entry name" value="Complement decay-accelerating factor, GPI-anchored"/>
    <property type="match status" value="1"/>
</dbReference>
<dbReference type="FunFam" id="2.10.70.10:FF:000008">
    <property type="entry name" value="Complement receptor type 1"/>
    <property type="match status" value="1"/>
</dbReference>
<dbReference type="FunFam" id="2.10.70.10:FF:000014">
    <property type="entry name" value="Membrane cofactor protein"/>
    <property type="match status" value="2"/>
</dbReference>
<dbReference type="FunFam" id="2.10.70.10:FF:000095">
    <property type="entry name" value="Zona pellucida sperm-binding protein 3 receptor"/>
    <property type="match status" value="1"/>
</dbReference>
<dbReference type="Gene3D" id="1.20.5.3730">
    <property type="match status" value="1"/>
</dbReference>
<dbReference type="Gene3D" id="2.20.28.230">
    <property type="match status" value="1"/>
</dbReference>
<dbReference type="Gene3D" id="2.10.70.10">
    <property type="entry name" value="Complement Module, domain 1"/>
    <property type="match status" value="7"/>
</dbReference>
<dbReference type="InterPro" id="IPR040514">
    <property type="entry name" value="C4bp_oligo"/>
</dbReference>
<dbReference type="InterPro" id="IPR050350">
    <property type="entry name" value="Compl-Cell_Adhes-Reg"/>
</dbReference>
<dbReference type="InterPro" id="IPR035976">
    <property type="entry name" value="Sushi/SCR/CCP_sf"/>
</dbReference>
<dbReference type="InterPro" id="IPR000436">
    <property type="entry name" value="Sushi_SCR_CCP_dom"/>
</dbReference>
<dbReference type="PANTHER" id="PTHR19325:SF564">
    <property type="entry name" value="C4B-BINDING PROTEIN"/>
    <property type="match status" value="1"/>
</dbReference>
<dbReference type="PANTHER" id="PTHR19325">
    <property type="entry name" value="COMPLEMENT COMPONENT-RELATED SUSHI DOMAIN-CONTAINING"/>
    <property type="match status" value="1"/>
</dbReference>
<dbReference type="Pfam" id="PF18453">
    <property type="entry name" value="C4bp_oligo"/>
    <property type="match status" value="1"/>
</dbReference>
<dbReference type="Pfam" id="PF00084">
    <property type="entry name" value="Sushi"/>
    <property type="match status" value="8"/>
</dbReference>
<dbReference type="SMART" id="SM00032">
    <property type="entry name" value="CCP"/>
    <property type="match status" value="8"/>
</dbReference>
<dbReference type="SUPFAM" id="SSF57535">
    <property type="entry name" value="Complement control module/SCR domain"/>
    <property type="match status" value="8"/>
</dbReference>
<dbReference type="PROSITE" id="PS50923">
    <property type="entry name" value="SUSHI"/>
    <property type="match status" value="8"/>
</dbReference>
<sequence>MSLTAALWVAVFGKCGPPPDLPYALPASEMNQTDFESHTTLRYNCRPGYSRASSSQSLYCKPLGKWQINIACVKKSCRNPGDLQNGKVEVKTDFLFGSQIEFSCSEGYILIGSSTSYCEIQGKGVSWSDPLPECVIAKCGMPPDISNGKHNGREEEFFTYRSSVTYKCDPDFTLLGNASITCTVVNKTVGVWSPSPPTCERIICPWPKVLHGTINSGFKHTYKYKDSVRFVCQKGFVLRGSGVIHCEADGSWSPVPVCELNSCTDIPDIPNAALITSPRPRKEDVYPVGTVLRYICRPGYEPATRQPMTVICQKDLSWSMLRGCKEICCPVPDPKSVRVIQHEKAHPDNDCTYFFGDEVSYTCQNDIMLTATCKSDGTWHPRTPSCHQSCDFPPAIAHGRYTKSSSYYVRTQVTYECEEGYRLVGEATISCWYSQWTPAAPQCKALCRKPEIGNGVLSTNKDQYVETENVTIQCDSGFVMLGSQSITCSENGTWYPKVSRCEQEVPKDCEHVFAGKKLMQCLPNSNDVKMALEVYKLTLEIKQLQLQIDKAKHVDREL</sequence>
<comment type="function">
    <text>Controls the classical pathway of complement activation. It binds as a cofactor to C3b/C4b inactivator (C3bINA), which then hydrolyzes the complement fragment C4b. It also accelerates the degradation of the C4bC2a complex (C3 convertase) by dissociating the complement fragment C2a. Alpha chain binds C4b. It also interacts with anticoagulant protein S and with serum amyloid P component.</text>
</comment>
<comment type="subunit">
    <text>Disulfide-linked complex of alpha and beta chains.</text>
</comment>
<comment type="subcellular location">
    <subcellularLocation>
        <location>Secreted</location>
    </subcellularLocation>
</comment>
<proteinExistence type="evidence at transcript level"/>
<gene>
    <name type="primary">C4bpa</name>
</gene>
<keyword id="KW-0180">Complement pathway</keyword>
<keyword id="KW-1015">Disulfide bond</keyword>
<keyword id="KW-0325">Glycoprotein</keyword>
<keyword id="KW-0391">Immunity</keyword>
<keyword id="KW-0399">Innate immunity</keyword>
<keyword id="KW-1185">Reference proteome</keyword>
<keyword id="KW-0677">Repeat</keyword>
<keyword id="KW-0964">Secreted</keyword>
<keyword id="KW-0732">Signal</keyword>
<keyword id="KW-0768">Sushi</keyword>